<dbReference type="EMBL" id="AC007258">
    <property type="protein sequence ID" value="AAD39314.1"/>
    <property type="status" value="ALT_SEQ"/>
    <property type="molecule type" value="Genomic_DNA"/>
</dbReference>
<dbReference type="EMBL" id="AC009317">
    <property type="protein sequence ID" value="AAF79766.1"/>
    <property type="status" value="ALT_SEQ"/>
    <property type="molecule type" value="Genomic_DNA"/>
</dbReference>
<dbReference type="EMBL" id="CP002684">
    <property type="protein sequence ID" value="AEE33607.1"/>
    <property type="molecule type" value="Genomic_DNA"/>
</dbReference>
<dbReference type="EMBL" id="AK228565">
    <property type="protein sequence ID" value="BAF00484.1"/>
    <property type="molecule type" value="mRNA"/>
</dbReference>
<dbReference type="PIR" id="H96620">
    <property type="entry name" value="H96620"/>
</dbReference>
<dbReference type="RefSeq" id="NP_176180.1">
    <property type="nucleotide sequence ID" value="NM_104664.2"/>
</dbReference>
<dbReference type="SMR" id="Q0WQW5"/>
<dbReference type="BioGRID" id="27488">
    <property type="interactions" value="1"/>
</dbReference>
<dbReference type="FunCoup" id="Q0WQW5">
    <property type="interactions" value="96"/>
</dbReference>
<dbReference type="STRING" id="3702.Q0WQW5"/>
<dbReference type="PaxDb" id="3702-AT1G59720.1"/>
<dbReference type="ProteomicsDB" id="234861"/>
<dbReference type="EnsemblPlants" id="AT1G59720.1">
    <property type="protein sequence ID" value="AT1G59720.1"/>
    <property type="gene ID" value="AT1G59720"/>
</dbReference>
<dbReference type="GeneID" id="842263"/>
<dbReference type="Gramene" id="AT1G59720.1">
    <property type="protein sequence ID" value="AT1G59720.1"/>
    <property type="gene ID" value="AT1G59720"/>
</dbReference>
<dbReference type="KEGG" id="ath:AT1G59720"/>
<dbReference type="Araport" id="AT1G59720"/>
<dbReference type="TAIR" id="AT1G59720">
    <property type="gene designation" value="CRR28"/>
</dbReference>
<dbReference type="eggNOG" id="KOG4197">
    <property type="taxonomic scope" value="Eukaryota"/>
</dbReference>
<dbReference type="HOGENOM" id="CLU_002706_37_2_1"/>
<dbReference type="InParanoid" id="Q0WQW5"/>
<dbReference type="OMA" id="VEIIMRD"/>
<dbReference type="OrthoDB" id="185373at2759"/>
<dbReference type="PhylomeDB" id="Q0WQW5"/>
<dbReference type="PRO" id="PR:Q0WQW5"/>
<dbReference type="Proteomes" id="UP000006548">
    <property type="component" value="Chromosome 1"/>
</dbReference>
<dbReference type="ExpressionAtlas" id="Q0WQW5">
    <property type="expression patterns" value="baseline and differential"/>
</dbReference>
<dbReference type="GO" id="GO:0009507">
    <property type="term" value="C:chloroplast"/>
    <property type="evidence" value="ECO:0000314"/>
    <property type="project" value="TAIR"/>
</dbReference>
<dbReference type="GO" id="GO:0005739">
    <property type="term" value="C:mitochondrion"/>
    <property type="evidence" value="ECO:0007669"/>
    <property type="project" value="UniProtKB-SubCell"/>
</dbReference>
<dbReference type="GO" id="GO:0004519">
    <property type="term" value="F:endonuclease activity"/>
    <property type="evidence" value="ECO:0000314"/>
    <property type="project" value="TAIR"/>
</dbReference>
<dbReference type="GO" id="GO:0003723">
    <property type="term" value="F:RNA binding"/>
    <property type="evidence" value="ECO:0007669"/>
    <property type="project" value="InterPro"/>
</dbReference>
<dbReference type="GO" id="GO:0008270">
    <property type="term" value="F:zinc ion binding"/>
    <property type="evidence" value="ECO:0007669"/>
    <property type="project" value="InterPro"/>
</dbReference>
<dbReference type="GO" id="GO:0016556">
    <property type="term" value="P:mRNA modification"/>
    <property type="evidence" value="ECO:0000315"/>
    <property type="project" value="TAIR"/>
</dbReference>
<dbReference type="GO" id="GO:0006397">
    <property type="term" value="P:mRNA processing"/>
    <property type="evidence" value="ECO:0007669"/>
    <property type="project" value="UniProtKB-KW"/>
</dbReference>
<dbReference type="FunFam" id="1.25.40.10:FF:000474">
    <property type="entry name" value="Pentatricopeptide repeat protein PPR986-12"/>
    <property type="match status" value="1"/>
</dbReference>
<dbReference type="FunFam" id="1.25.40.10:FF:002121">
    <property type="entry name" value="Pentatricopeptide repeat-containing protein At1g59720, chloroplastic/mitochondrial"/>
    <property type="match status" value="1"/>
</dbReference>
<dbReference type="FunFam" id="1.25.40.10:FF:000396">
    <property type="entry name" value="Pentatricopeptide repeat-containing protein At2g36730"/>
    <property type="match status" value="1"/>
</dbReference>
<dbReference type="Gene3D" id="1.25.40.10">
    <property type="entry name" value="Tetratricopeptide repeat domain"/>
    <property type="match status" value="4"/>
</dbReference>
<dbReference type="InterPro" id="IPR032867">
    <property type="entry name" value="DYW_dom"/>
</dbReference>
<dbReference type="InterPro" id="IPR046848">
    <property type="entry name" value="E_motif"/>
</dbReference>
<dbReference type="InterPro" id="IPR046849">
    <property type="entry name" value="Eplus_motif"/>
</dbReference>
<dbReference type="InterPro" id="IPR002885">
    <property type="entry name" value="Pentatricopeptide_rpt"/>
</dbReference>
<dbReference type="InterPro" id="IPR046960">
    <property type="entry name" value="PPR_At4g14850-like_plant"/>
</dbReference>
<dbReference type="InterPro" id="IPR011990">
    <property type="entry name" value="TPR-like_helical_dom_sf"/>
</dbReference>
<dbReference type="NCBIfam" id="TIGR00756">
    <property type="entry name" value="PPR"/>
    <property type="match status" value="4"/>
</dbReference>
<dbReference type="PANTHER" id="PTHR47926">
    <property type="entry name" value="PENTATRICOPEPTIDE REPEAT-CONTAINING PROTEIN"/>
    <property type="match status" value="1"/>
</dbReference>
<dbReference type="PANTHER" id="PTHR47926:SF508">
    <property type="entry name" value="PENTATRICOPEPTIDE REPEAT-CONTAINING PROTEIN"/>
    <property type="match status" value="1"/>
</dbReference>
<dbReference type="Pfam" id="PF14432">
    <property type="entry name" value="DYW_deaminase"/>
    <property type="match status" value="1"/>
</dbReference>
<dbReference type="Pfam" id="PF20431">
    <property type="entry name" value="E_motif"/>
    <property type="match status" value="1"/>
</dbReference>
<dbReference type="Pfam" id="PF20430">
    <property type="entry name" value="Eplus_motif"/>
    <property type="match status" value="1"/>
</dbReference>
<dbReference type="Pfam" id="PF01535">
    <property type="entry name" value="PPR"/>
    <property type="match status" value="2"/>
</dbReference>
<dbReference type="Pfam" id="PF13041">
    <property type="entry name" value="PPR_2"/>
    <property type="match status" value="2"/>
</dbReference>
<dbReference type="SUPFAM" id="SSF48452">
    <property type="entry name" value="TPR-like"/>
    <property type="match status" value="1"/>
</dbReference>
<dbReference type="PROSITE" id="PS51375">
    <property type="entry name" value="PPR"/>
    <property type="match status" value="10"/>
</dbReference>
<evidence type="ECO:0000255" key="1"/>
<evidence type="ECO:0000269" key="2">
    <source>
    </source>
</evidence>
<evidence type="ECO:0000269" key="3">
    <source>
    </source>
</evidence>
<evidence type="ECO:0000269" key="4">
    <source>
    </source>
</evidence>
<evidence type="ECO:0000269" key="5">
    <source>
    </source>
</evidence>
<evidence type="ECO:0000303" key="6">
    <source>
    </source>
</evidence>
<evidence type="ECO:0000305" key="7"/>
<feature type="transit peptide" description="Chloroplast and mitochondrion">
    <location>
        <begin position="1"/>
        <end position="40"/>
    </location>
</feature>
<feature type="chain" id="PRO_0000342826" description="Pentatricopeptide repeat-containing protein At1g59720, chloroplastic/mitochondrial" evidence="1">
    <location>
        <begin position="41"/>
        <end position="638"/>
    </location>
</feature>
<feature type="repeat" description="PPR 1">
    <location>
        <begin position="82"/>
        <end position="112"/>
    </location>
</feature>
<feature type="repeat" description="PPR 2">
    <location>
        <begin position="113"/>
        <end position="148"/>
    </location>
</feature>
<feature type="repeat" description="PPR 3">
    <location>
        <begin position="150"/>
        <end position="184"/>
    </location>
</feature>
<feature type="repeat" description="PPR 4">
    <location>
        <begin position="185"/>
        <end position="215"/>
    </location>
</feature>
<feature type="repeat" description="PPR 5">
    <location>
        <begin position="216"/>
        <end position="246"/>
    </location>
</feature>
<feature type="repeat" description="PPR 6">
    <location>
        <begin position="250"/>
        <end position="280"/>
    </location>
</feature>
<feature type="repeat" description="PPR 7">
    <location>
        <begin position="288"/>
        <end position="318"/>
    </location>
</feature>
<feature type="repeat" description="PPR 8">
    <location>
        <begin position="319"/>
        <end position="353"/>
    </location>
</feature>
<feature type="repeat" description="PPR 9">
    <location>
        <begin position="356"/>
        <end position="390"/>
    </location>
</feature>
<feature type="repeat" description="PPR 10">
    <location>
        <begin position="392"/>
        <end position="422"/>
    </location>
</feature>
<feature type="region of interest" description="Type E motif">
    <location>
        <begin position="427"/>
        <end position="510"/>
    </location>
</feature>
<feature type="region of interest" description="Type E(+) motif">
    <location>
        <begin position="511"/>
        <end position="541"/>
    </location>
</feature>
<feature type="region of interest" description="Type DYW motif">
    <location>
        <begin position="542"/>
        <end position="638"/>
    </location>
</feature>
<sequence>MVVRSIIVSPPTTITYYHPMSIGLLVHPLSPHIPPASSPSASTAGNHHQRIFSLAETCSDMSQLKQLHAFTLRTTYPEEPATLFLYGKILQLSSSFSDVNYAFRVFDSIENHSSFMWNTLIRACAHDVSRKEEAFMLYRKMLERGESSPDKHTFPFVLKACAYIFGFSEGKQVHCQIVKHGFGGDVYVNNGLIHLYGSCGCLDLARKVFDEMPERSLVSWNSMIDALVRFGEYDSALQLFREMQRSFEPDGYTMQSVLSACAGLGSLSLGTWAHAFLLRKCDVDVAMDVLVKNSLIEMYCKCGSLRMAEQVFQGMQKRDLASWNAMILGFATHGRAEEAMNFFDRMVDKRENVRPNSVTFVGLLIACNHRGFVNKGRQYFDMMVRDYCIEPALEHYGCIVDLIARAGYITEAIDMVMSMPMKPDAVIWRSLLDACCKKGASVELSEEIARNIIGTKEDNESSNGNCSGAYVLLSRVYASASRWNDVGIVRKLMSEHGIRKEPGCSSIEINGISHEFFAGDTSHPQTKQIYQQLKVIDDRLRSIGYLPDRSQAPLVDATNDGSKEYSLRLHSERLAIAFGLINLPPQTPIRIFKNLRVCNDCHEVTKLISKVFNTEIIVRDRVRFHHFKDGSCSCLDYW</sequence>
<comment type="function">
    <text evidence="3">Involved in multiple sites RNA editing events in chloroplasts. Involved in the editing of the site 2 of ndhB (ndhB-2) and site 3 of ndhD (ndhD-3) transcripts, which are two plastid-encoded subunits of the chloroplast NAD(P)H dehydrogenase (NDH) complex. Required for the activity of the NDH complex of the photosynthetic electron transport chain.</text>
</comment>
<comment type="subunit">
    <text evidence="4 5">Interacts with ORRM1 (PubMed:23487777). Interacts with VAR3/OZ1 (PubMed:25768119).</text>
</comment>
<comment type="subcellular location">
    <subcellularLocation>
        <location evidence="1">Plastid</location>
        <location evidence="1">Chloroplast</location>
    </subcellularLocation>
    <subcellularLocation>
        <location evidence="2">Mitochondrion</location>
    </subcellularLocation>
</comment>
<comment type="disruption phenotype">
    <text evidence="3">Impaired chloroplastic NAD(P)H dehydrogenase (NDH) activity.</text>
</comment>
<comment type="miscellaneous">
    <text evidence="3">The DYW motif is dispensable for editing activity in vivo.</text>
</comment>
<comment type="similarity">
    <text evidence="7">Belongs to the PPR family. PCMP-H subfamily.</text>
</comment>
<comment type="sequence caution" evidence="7">
    <conflict type="erroneous gene model prediction">
        <sequence resource="EMBL-CDS" id="AAD39314"/>
    </conflict>
</comment>
<comment type="sequence caution" evidence="7">
    <conflict type="erroneous gene model prediction">
        <sequence resource="EMBL-CDS" id="AAF79766"/>
    </conflict>
</comment>
<comment type="online information" name="Pentatricopeptide repeat proteins">
    <link uri="https://ppr.plantenergy.uwa.edu.au"/>
</comment>
<reference key="1">
    <citation type="journal article" date="2000" name="Nature">
        <title>Sequence and analysis of chromosome 1 of the plant Arabidopsis thaliana.</title>
        <authorList>
            <person name="Theologis A."/>
            <person name="Ecker J.R."/>
            <person name="Palm C.J."/>
            <person name="Federspiel N.A."/>
            <person name="Kaul S."/>
            <person name="White O."/>
            <person name="Alonso J."/>
            <person name="Altafi H."/>
            <person name="Araujo R."/>
            <person name="Bowman C.L."/>
            <person name="Brooks S.Y."/>
            <person name="Buehler E."/>
            <person name="Chan A."/>
            <person name="Chao Q."/>
            <person name="Chen H."/>
            <person name="Cheuk R.F."/>
            <person name="Chin C.W."/>
            <person name="Chung M.K."/>
            <person name="Conn L."/>
            <person name="Conway A.B."/>
            <person name="Conway A.R."/>
            <person name="Creasy T.H."/>
            <person name="Dewar K."/>
            <person name="Dunn P."/>
            <person name="Etgu P."/>
            <person name="Feldblyum T.V."/>
            <person name="Feng J.-D."/>
            <person name="Fong B."/>
            <person name="Fujii C.Y."/>
            <person name="Gill J.E."/>
            <person name="Goldsmith A.D."/>
            <person name="Haas B."/>
            <person name="Hansen N.F."/>
            <person name="Hughes B."/>
            <person name="Huizar L."/>
            <person name="Hunter J.L."/>
            <person name="Jenkins J."/>
            <person name="Johnson-Hopson C."/>
            <person name="Khan S."/>
            <person name="Khaykin E."/>
            <person name="Kim C.J."/>
            <person name="Koo H.L."/>
            <person name="Kremenetskaia I."/>
            <person name="Kurtz D.B."/>
            <person name="Kwan A."/>
            <person name="Lam B."/>
            <person name="Langin-Hooper S."/>
            <person name="Lee A."/>
            <person name="Lee J.M."/>
            <person name="Lenz C.A."/>
            <person name="Li J.H."/>
            <person name="Li Y.-P."/>
            <person name="Lin X."/>
            <person name="Liu S.X."/>
            <person name="Liu Z.A."/>
            <person name="Luros J.S."/>
            <person name="Maiti R."/>
            <person name="Marziali A."/>
            <person name="Militscher J."/>
            <person name="Miranda M."/>
            <person name="Nguyen M."/>
            <person name="Nierman W.C."/>
            <person name="Osborne B.I."/>
            <person name="Pai G."/>
            <person name="Peterson J."/>
            <person name="Pham P.K."/>
            <person name="Rizzo M."/>
            <person name="Rooney T."/>
            <person name="Rowley D."/>
            <person name="Sakano H."/>
            <person name="Salzberg S.L."/>
            <person name="Schwartz J.R."/>
            <person name="Shinn P."/>
            <person name="Southwick A.M."/>
            <person name="Sun H."/>
            <person name="Tallon L.J."/>
            <person name="Tambunga G."/>
            <person name="Toriumi M.J."/>
            <person name="Town C.D."/>
            <person name="Utterback T."/>
            <person name="Van Aken S."/>
            <person name="Vaysberg M."/>
            <person name="Vysotskaia V.S."/>
            <person name="Walker M."/>
            <person name="Wu D."/>
            <person name="Yu G."/>
            <person name="Fraser C.M."/>
            <person name="Venter J.C."/>
            <person name="Davis R.W."/>
        </authorList>
    </citation>
    <scope>NUCLEOTIDE SEQUENCE [LARGE SCALE GENOMIC DNA]</scope>
    <source>
        <strain>cv. Columbia</strain>
    </source>
</reference>
<reference key="2">
    <citation type="journal article" date="2017" name="Plant J.">
        <title>Araport11: a complete reannotation of the Arabidopsis thaliana reference genome.</title>
        <authorList>
            <person name="Cheng C.Y."/>
            <person name="Krishnakumar V."/>
            <person name="Chan A.P."/>
            <person name="Thibaud-Nissen F."/>
            <person name="Schobel S."/>
            <person name="Town C.D."/>
        </authorList>
    </citation>
    <scope>GENOME REANNOTATION</scope>
    <source>
        <strain>cv. Columbia</strain>
    </source>
</reference>
<reference key="3">
    <citation type="submission" date="2006-07" db="EMBL/GenBank/DDBJ databases">
        <title>Large-scale analysis of RIKEN Arabidopsis full-length (RAFL) cDNAs.</title>
        <authorList>
            <person name="Totoki Y."/>
            <person name="Seki M."/>
            <person name="Ishida J."/>
            <person name="Nakajima M."/>
            <person name="Enju A."/>
            <person name="Kamiya A."/>
            <person name="Narusaka M."/>
            <person name="Shin-i T."/>
            <person name="Nakagawa M."/>
            <person name="Sakamoto N."/>
            <person name="Oishi K."/>
            <person name="Kohara Y."/>
            <person name="Kobayashi M."/>
            <person name="Toyoda A."/>
            <person name="Sakaki Y."/>
            <person name="Sakurai T."/>
            <person name="Iida K."/>
            <person name="Akiyama K."/>
            <person name="Satou M."/>
            <person name="Toyoda T."/>
            <person name="Konagaya A."/>
            <person name="Carninci P."/>
            <person name="Kawai J."/>
            <person name="Hayashizaki Y."/>
            <person name="Shinozaki K."/>
        </authorList>
    </citation>
    <scope>NUCLEOTIDE SEQUENCE [LARGE SCALE MRNA] OF 10-638</scope>
    <source>
        <strain>cv. Columbia</strain>
    </source>
</reference>
<reference key="4">
    <citation type="journal article" date="2000" name="Plant Mol. Biol.">
        <title>In Arabidopsis thaliana, 1% of the genome codes for a novel protein family unique to plants.</title>
        <authorList>
            <person name="Aubourg S."/>
            <person name="Boudet N."/>
            <person name="Kreis M."/>
            <person name="Lecharny A."/>
        </authorList>
    </citation>
    <scope>GENE FAMILY</scope>
</reference>
<reference key="5">
    <citation type="journal article" date="2004" name="Plant Cell">
        <title>Genome-wide analysis of Arabidopsis pentatricopeptide repeat proteins reveals their essential role in organelle biogenesis.</title>
        <authorList>
            <person name="Lurin C."/>
            <person name="Andres C."/>
            <person name="Aubourg S."/>
            <person name="Bellaoui M."/>
            <person name="Bitton F."/>
            <person name="Bruyere C."/>
            <person name="Caboche M."/>
            <person name="Debast C."/>
            <person name="Gualberto J."/>
            <person name="Hoffmann B."/>
            <person name="Lecharny A."/>
            <person name="Le Ret M."/>
            <person name="Martin-Magniette M.-L."/>
            <person name="Mireau H."/>
            <person name="Peeters N."/>
            <person name="Renou J.-P."/>
            <person name="Szurek B."/>
            <person name="Taconnat L."/>
            <person name="Small I."/>
        </authorList>
    </citation>
    <scope>GENE FAMILY</scope>
    <scope>SUBCELLULAR LOCATION</scope>
</reference>
<reference key="6">
    <citation type="journal article" date="2009" name="Plant Cell">
        <title>Pentatricopeptide repeat proteins with the DYW motif have distinct molecular functions in RNA editing and RNA cleavage in Arabidopsis chloroplasts.</title>
        <authorList>
            <person name="Okuda K."/>
            <person name="Chateigner-Boutin A.L."/>
            <person name="Nakamura T."/>
            <person name="Delannoy E."/>
            <person name="Sugita M."/>
            <person name="Myouga F."/>
            <person name="Motohashi R."/>
            <person name="Shinozaki K."/>
            <person name="Small I."/>
            <person name="Shikanai T."/>
        </authorList>
    </citation>
    <scope>FUNCTION</scope>
    <scope>DISRUPTION PHENOTYPE</scope>
</reference>
<reference key="7">
    <citation type="journal article" date="2013" name="Proc. Natl. Acad. Sci. U.S.A.">
        <title>An RNA recognition motif-containing protein is required for plastid RNA editing in Arabidopsis and maize.</title>
        <authorList>
            <person name="Sun T."/>
            <person name="Germain A."/>
            <person name="Giloteaux L."/>
            <person name="Hammani K."/>
            <person name="Barkan A."/>
            <person name="Hanson M.R."/>
            <person name="Bentolila S."/>
        </authorList>
    </citation>
    <scope>INTERACTION WITH ORRM1</scope>
</reference>
<reference key="8">
    <citation type="journal article" date="2015" name="PLoS Genet.">
        <title>A zinc finger motif-containing protein is essential for chloroplast RNA editing.</title>
        <authorList>
            <person name="Sun T."/>
            <person name="Shi X."/>
            <person name="Friso G."/>
            <person name="Van Wijk K."/>
            <person name="Bentolila S."/>
            <person name="Hanson M.R."/>
        </authorList>
    </citation>
    <scope>INTERACTION WITH VAR3/OZ1</scope>
</reference>
<gene>
    <name type="primary">PCMP-H51</name>
    <name evidence="6" type="synonym">CRR28</name>
    <name type="ordered locus">At1g59720</name>
    <name type="ORF">F23H11.3</name>
    <name type="ORF">T30E16.32</name>
</gene>
<proteinExistence type="evidence at protein level"/>
<accession>Q0WQW5</accession>
<accession>Q9LQ42</accession>
<accession>Q9XIF6</accession>
<protein>
    <recommendedName>
        <fullName evidence="7">Pentatricopeptide repeat-containing protein At1g59720, chloroplastic/mitochondrial</fullName>
    </recommendedName>
    <alternativeName>
        <fullName evidence="6">Protein CHLORORESPIRATORY REDUCTION 28</fullName>
    </alternativeName>
</protein>
<organism>
    <name type="scientific">Arabidopsis thaliana</name>
    <name type="common">Mouse-ear cress</name>
    <dbReference type="NCBI Taxonomy" id="3702"/>
    <lineage>
        <taxon>Eukaryota</taxon>
        <taxon>Viridiplantae</taxon>
        <taxon>Streptophyta</taxon>
        <taxon>Embryophyta</taxon>
        <taxon>Tracheophyta</taxon>
        <taxon>Spermatophyta</taxon>
        <taxon>Magnoliopsida</taxon>
        <taxon>eudicotyledons</taxon>
        <taxon>Gunneridae</taxon>
        <taxon>Pentapetalae</taxon>
        <taxon>rosids</taxon>
        <taxon>malvids</taxon>
        <taxon>Brassicales</taxon>
        <taxon>Brassicaceae</taxon>
        <taxon>Camelineae</taxon>
        <taxon>Arabidopsis</taxon>
    </lineage>
</organism>
<name>PPR85_ARATH</name>
<keyword id="KW-0150">Chloroplast</keyword>
<keyword id="KW-0496">Mitochondrion</keyword>
<keyword id="KW-0507">mRNA processing</keyword>
<keyword id="KW-0934">Plastid</keyword>
<keyword id="KW-1185">Reference proteome</keyword>
<keyword id="KW-0677">Repeat</keyword>
<keyword id="KW-0809">Transit peptide</keyword>